<sequence length="38" mass="4457">MKVRSSVKPICEHCKVVKRQGVTRIICKRNPKHKQRQG</sequence>
<dbReference type="EMBL" id="AP009153">
    <property type="protein sequence ID" value="BAH39019.1"/>
    <property type="molecule type" value="Genomic_DNA"/>
</dbReference>
<dbReference type="RefSeq" id="WP_012683466.1">
    <property type="nucleotide sequence ID" value="NC_012489.1"/>
</dbReference>
<dbReference type="SMR" id="C1A4J4"/>
<dbReference type="STRING" id="379066.GAU_1977"/>
<dbReference type="KEGG" id="gau:GAU_1977"/>
<dbReference type="eggNOG" id="COG0257">
    <property type="taxonomic scope" value="Bacteria"/>
</dbReference>
<dbReference type="HOGENOM" id="CLU_135723_6_2_0"/>
<dbReference type="OrthoDB" id="9802520at2"/>
<dbReference type="Proteomes" id="UP000002209">
    <property type="component" value="Chromosome"/>
</dbReference>
<dbReference type="GO" id="GO:0005737">
    <property type="term" value="C:cytoplasm"/>
    <property type="evidence" value="ECO:0007669"/>
    <property type="project" value="UniProtKB-ARBA"/>
</dbReference>
<dbReference type="GO" id="GO:1990904">
    <property type="term" value="C:ribonucleoprotein complex"/>
    <property type="evidence" value="ECO:0007669"/>
    <property type="project" value="UniProtKB-KW"/>
</dbReference>
<dbReference type="GO" id="GO:0005840">
    <property type="term" value="C:ribosome"/>
    <property type="evidence" value="ECO:0007669"/>
    <property type="project" value="UniProtKB-KW"/>
</dbReference>
<dbReference type="GO" id="GO:0003735">
    <property type="term" value="F:structural constituent of ribosome"/>
    <property type="evidence" value="ECO:0007669"/>
    <property type="project" value="InterPro"/>
</dbReference>
<dbReference type="GO" id="GO:0006412">
    <property type="term" value="P:translation"/>
    <property type="evidence" value="ECO:0007669"/>
    <property type="project" value="UniProtKB-UniRule"/>
</dbReference>
<dbReference type="HAMAP" id="MF_00251">
    <property type="entry name" value="Ribosomal_bL36"/>
    <property type="match status" value="1"/>
</dbReference>
<dbReference type="InterPro" id="IPR000473">
    <property type="entry name" value="Ribosomal_bL36"/>
</dbReference>
<dbReference type="InterPro" id="IPR035977">
    <property type="entry name" value="Ribosomal_bL36_sp"/>
</dbReference>
<dbReference type="NCBIfam" id="TIGR01022">
    <property type="entry name" value="rpmJ_bact"/>
    <property type="match status" value="1"/>
</dbReference>
<dbReference type="PANTHER" id="PTHR42888">
    <property type="entry name" value="50S RIBOSOMAL PROTEIN L36, CHLOROPLASTIC"/>
    <property type="match status" value="1"/>
</dbReference>
<dbReference type="PANTHER" id="PTHR42888:SF1">
    <property type="entry name" value="LARGE RIBOSOMAL SUBUNIT PROTEIN BL36C"/>
    <property type="match status" value="1"/>
</dbReference>
<dbReference type="Pfam" id="PF00444">
    <property type="entry name" value="Ribosomal_L36"/>
    <property type="match status" value="1"/>
</dbReference>
<dbReference type="SUPFAM" id="SSF57840">
    <property type="entry name" value="Ribosomal protein L36"/>
    <property type="match status" value="1"/>
</dbReference>
<keyword id="KW-1185">Reference proteome</keyword>
<keyword id="KW-0687">Ribonucleoprotein</keyword>
<keyword id="KW-0689">Ribosomal protein</keyword>
<comment type="similarity">
    <text evidence="1">Belongs to the bacterial ribosomal protein bL36 family.</text>
</comment>
<protein>
    <recommendedName>
        <fullName evidence="1">Large ribosomal subunit protein bL36</fullName>
    </recommendedName>
    <alternativeName>
        <fullName evidence="2">50S ribosomal protein L36</fullName>
    </alternativeName>
</protein>
<organism>
    <name type="scientific">Gemmatimonas aurantiaca (strain DSM 14586 / JCM 11422 / NBRC 100505 / T-27)</name>
    <dbReference type="NCBI Taxonomy" id="379066"/>
    <lineage>
        <taxon>Bacteria</taxon>
        <taxon>Pseudomonadati</taxon>
        <taxon>Gemmatimonadota</taxon>
        <taxon>Gemmatimonadia</taxon>
        <taxon>Gemmatimonadales</taxon>
        <taxon>Gemmatimonadaceae</taxon>
        <taxon>Gemmatimonas</taxon>
    </lineage>
</organism>
<accession>C1A4J4</accession>
<gene>
    <name evidence="1" type="primary">rpmJ</name>
    <name type="ordered locus">GAU_1977</name>
</gene>
<reference key="1">
    <citation type="submission" date="2006-03" db="EMBL/GenBank/DDBJ databases">
        <title>Complete genome sequence of Gemmatimonas aurantiaca T-27 that represents a novel phylum Gemmatimonadetes.</title>
        <authorList>
            <person name="Takasaki K."/>
            <person name="Ichikawa N."/>
            <person name="Miura H."/>
            <person name="Matsushita S."/>
            <person name="Watanabe Y."/>
            <person name="Oguchi A."/>
            <person name="Ankai A."/>
            <person name="Yashiro I."/>
            <person name="Takahashi M."/>
            <person name="Terui Y."/>
            <person name="Fukui S."/>
            <person name="Yokoyama H."/>
            <person name="Tanikawa S."/>
            <person name="Hanada S."/>
            <person name="Kamagata Y."/>
            <person name="Fujita N."/>
        </authorList>
    </citation>
    <scope>NUCLEOTIDE SEQUENCE [LARGE SCALE GENOMIC DNA]</scope>
    <source>
        <strain>DSM 14586 / JCM 11422 / NBRC 100505 / T-27</strain>
    </source>
</reference>
<proteinExistence type="inferred from homology"/>
<feature type="chain" id="PRO_1000204551" description="Large ribosomal subunit protein bL36">
    <location>
        <begin position="1"/>
        <end position="38"/>
    </location>
</feature>
<name>RL36_GEMAT</name>
<evidence type="ECO:0000255" key="1">
    <source>
        <dbReference type="HAMAP-Rule" id="MF_00251"/>
    </source>
</evidence>
<evidence type="ECO:0000305" key="2"/>